<accession>Q7RYZ7</accession>
<name>DBP8_NEUCR</name>
<gene>
    <name type="primary">dbp-8</name>
    <name type="ORF">NCU06418</name>
</gene>
<sequence length="626" mass="68747">MPSATAAKAKKANANANLKSKVNKAPAVTEIDEQSGHSEDESDFGSELDVEDESAASDEEDEDEDEDEHDLEEGVSDEGEGVSDEEEGVSDEDEDEENQSAGSGSDSDSDSLDSDAPRKRRRTSPTIDDIVTQLEDEEEDDTPVAPVKPVFNNVPSRIKKKQAEAPKTEKTEEATPALPVPEPASTVSVPIDANTTFDALNVRPWLVQSLANMAIKRPTGIQKGCIPEILKGRDCIGGSRTGSGKTVAFAVPILQQWAANPSAIFGVILTPTRELALQIMEQVIALSQPHVLKAVLITGGADMRKQAIDLAKRPHLVIATPGRLADHIRTSGEDTICGLRRVKFIVLDEADRLLANSGHGSMLPDVEECFSVLPPPSERQTLLFTATMTPEVKALSERPPIPGRAPVFVCEVDTQRLAIPATLRQMHLQVPVTHREHYLHMFLLTPQNVDKSVIIFCNRTSTADFLHHLLRLLDHRVTSLHSKLPQSQRIDNLGRFRASAARILVATDVAARGLDIPEVKIVINYDIPRDPDDYIHRVGRTARAGRKGDAVTFVGQRDVDLVLAIEQRVGRQMEAWTEEGVNLETRVIRDALKVVGEKKREALLEIEEQKEVGGKRKRGKEKLRAM</sequence>
<feature type="chain" id="PRO_0000232290" description="ATP-dependent RNA helicase dbp-8">
    <location>
        <begin position="1"/>
        <end position="626"/>
    </location>
</feature>
<feature type="domain" description="Helicase ATP-binding" evidence="2">
    <location>
        <begin position="226"/>
        <end position="406"/>
    </location>
</feature>
<feature type="domain" description="Helicase C-terminal" evidence="3">
    <location>
        <begin position="438"/>
        <end position="589"/>
    </location>
</feature>
<feature type="region of interest" description="Disordered" evidence="4">
    <location>
        <begin position="1"/>
        <end position="183"/>
    </location>
</feature>
<feature type="short sequence motif" description="Q motif">
    <location>
        <begin position="195"/>
        <end position="223"/>
    </location>
</feature>
<feature type="short sequence motif" description="DEAD box">
    <location>
        <begin position="348"/>
        <end position="351"/>
    </location>
</feature>
<feature type="compositionally biased region" description="Low complexity" evidence="4">
    <location>
        <begin position="1"/>
        <end position="25"/>
    </location>
</feature>
<feature type="compositionally biased region" description="Acidic residues" evidence="4">
    <location>
        <begin position="40"/>
        <end position="98"/>
    </location>
</feature>
<feature type="compositionally biased region" description="Basic and acidic residues" evidence="4">
    <location>
        <begin position="161"/>
        <end position="173"/>
    </location>
</feature>
<feature type="binding site" evidence="2">
    <location>
        <begin position="239"/>
        <end position="246"/>
    </location>
    <ligand>
        <name>ATP</name>
        <dbReference type="ChEBI" id="CHEBI:30616"/>
    </ligand>
</feature>
<protein>
    <recommendedName>
        <fullName>ATP-dependent RNA helicase dbp-8</fullName>
        <ecNumber>3.6.4.13</ecNumber>
    </recommendedName>
</protein>
<proteinExistence type="inferred from homology"/>
<evidence type="ECO:0000250" key="1"/>
<evidence type="ECO:0000255" key="2">
    <source>
        <dbReference type="PROSITE-ProRule" id="PRU00541"/>
    </source>
</evidence>
<evidence type="ECO:0000255" key="3">
    <source>
        <dbReference type="PROSITE-ProRule" id="PRU00542"/>
    </source>
</evidence>
<evidence type="ECO:0000256" key="4">
    <source>
        <dbReference type="SAM" id="MobiDB-lite"/>
    </source>
</evidence>
<evidence type="ECO:0000305" key="5"/>
<keyword id="KW-0067">ATP-binding</keyword>
<keyword id="KW-0347">Helicase</keyword>
<keyword id="KW-0378">Hydrolase</keyword>
<keyword id="KW-0547">Nucleotide-binding</keyword>
<keyword id="KW-0539">Nucleus</keyword>
<keyword id="KW-1185">Reference proteome</keyword>
<keyword id="KW-0690">Ribosome biogenesis</keyword>
<keyword id="KW-0694">RNA-binding</keyword>
<keyword id="KW-0698">rRNA processing</keyword>
<dbReference type="EC" id="3.6.4.13"/>
<dbReference type="EMBL" id="CM002238">
    <property type="protein sequence ID" value="EAA28073.1"/>
    <property type="molecule type" value="Genomic_DNA"/>
</dbReference>
<dbReference type="RefSeq" id="XP_957309.1">
    <property type="nucleotide sequence ID" value="XM_952216.2"/>
</dbReference>
<dbReference type="SMR" id="Q7RYZ7"/>
<dbReference type="FunCoup" id="Q7RYZ7">
    <property type="interactions" value="801"/>
</dbReference>
<dbReference type="STRING" id="367110.Q7RYZ7"/>
<dbReference type="PaxDb" id="5141-EFNCRP00000006174"/>
<dbReference type="EnsemblFungi" id="EAA28073">
    <property type="protein sequence ID" value="EAA28073"/>
    <property type="gene ID" value="NCU06418"/>
</dbReference>
<dbReference type="GeneID" id="3873456"/>
<dbReference type="KEGG" id="ncr:NCU06418"/>
<dbReference type="VEuPathDB" id="FungiDB:NCU06418"/>
<dbReference type="HOGENOM" id="CLU_003041_1_1_1"/>
<dbReference type="InParanoid" id="Q7RYZ7"/>
<dbReference type="OMA" id="GMPYPKQ"/>
<dbReference type="OrthoDB" id="10261904at2759"/>
<dbReference type="Proteomes" id="UP000001805">
    <property type="component" value="Chromosome 3, Linkage Group III"/>
</dbReference>
<dbReference type="GO" id="GO:0005730">
    <property type="term" value="C:nucleolus"/>
    <property type="evidence" value="ECO:0007669"/>
    <property type="project" value="UniProtKB-SubCell"/>
</dbReference>
<dbReference type="GO" id="GO:0005634">
    <property type="term" value="C:nucleus"/>
    <property type="evidence" value="ECO:0000318"/>
    <property type="project" value="GO_Central"/>
</dbReference>
<dbReference type="GO" id="GO:0005524">
    <property type="term" value="F:ATP binding"/>
    <property type="evidence" value="ECO:0007669"/>
    <property type="project" value="UniProtKB-KW"/>
</dbReference>
<dbReference type="GO" id="GO:0016887">
    <property type="term" value="F:ATP hydrolysis activity"/>
    <property type="evidence" value="ECO:0007669"/>
    <property type="project" value="RHEA"/>
</dbReference>
<dbReference type="GO" id="GO:0003723">
    <property type="term" value="F:RNA binding"/>
    <property type="evidence" value="ECO:0007669"/>
    <property type="project" value="UniProtKB-KW"/>
</dbReference>
<dbReference type="GO" id="GO:0003724">
    <property type="term" value="F:RNA helicase activity"/>
    <property type="evidence" value="ECO:0007669"/>
    <property type="project" value="UniProtKB-EC"/>
</dbReference>
<dbReference type="GO" id="GO:0006364">
    <property type="term" value="P:rRNA processing"/>
    <property type="evidence" value="ECO:0000318"/>
    <property type="project" value="GO_Central"/>
</dbReference>
<dbReference type="CDD" id="cd17955">
    <property type="entry name" value="DEADc_DDX49"/>
    <property type="match status" value="1"/>
</dbReference>
<dbReference type="CDD" id="cd18787">
    <property type="entry name" value="SF2_C_DEAD"/>
    <property type="match status" value="1"/>
</dbReference>
<dbReference type="Gene3D" id="3.40.50.300">
    <property type="entry name" value="P-loop containing nucleotide triphosphate hydrolases"/>
    <property type="match status" value="2"/>
</dbReference>
<dbReference type="InterPro" id="IPR011545">
    <property type="entry name" value="DEAD/DEAH_box_helicase_dom"/>
</dbReference>
<dbReference type="InterPro" id="IPR050079">
    <property type="entry name" value="DEAD_box_RNA_helicase"/>
</dbReference>
<dbReference type="InterPro" id="IPR014001">
    <property type="entry name" value="Helicase_ATP-bd"/>
</dbReference>
<dbReference type="InterPro" id="IPR001650">
    <property type="entry name" value="Helicase_C-like"/>
</dbReference>
<dbReference type="InterPro" id="IPR027417">
    <property type="entry name" value="P-loop_NTPase"/>
</dbReference>
<dbReference type="InterPro" id="IPR000629">
    <property type="entry name" value="RNA-helicase_DEAD-box_CS"/>
</dbReference>
<dbReference type="InterPro" id="IPR014014">
    <property type="entry name" value="RNA_helicase_DEAD_Q_motif"/>
</dbReference>
<dbReference type="PANTHER" id="PTHR47959:SF24">
    <property type="entry name" value="ATP-DEPENDENT RNA HELICASE"/>
    <property type="match status" value="1"/>
</dbReference>
<dbReference type="PANTHER" id="PTHR47959">
    <property type="entry name" value="ATP-DEPENDENT RNA HELICASE RHLE-RELATED"/>
    <property type="match status" value="1"/>
</dbReference>
<dbReference type="Pfam" id="PF00270">
    <property type="entry name" value="DEAD"/>
    <property type="match status" value="1"/>
</dbReference>
<dbReference type="Pfam" id="PF00271">
    <property type="entry name" value="Helicase_C"/>
    <property type="match status" value="1"/>
</dbReference>
<dbReference type="SMART" id="SM00487">
    <property type="entry name" value="DEXDc"/>
    <property type="match status" value="1"/>
</dbReference>
<dbReference type="SMART" id="SM00490">
    <property type="entry name" value="HELICc"/>
    <property type="match status" value="1"/>
</dbReference>
<dbReference type="SUPFAM" id="SSF52540">
    <property type="entry name" value="P-loop containing nucleoside triphosphate hydrolases"/>
    <property type="match status" value="1"/>
</dbReference>
<dbReference type="PROSITE" id="PS00039">
    <property type="entry name" value="DEAD_ATP_HELICASE"/>
    <property type="match status" value="1"/>
</dbReference>
<dbReference type="PROSITE" id="PS51192">
    <property type="entry name" value="HELICASE_ATP_BIND_1"/>
    <property type="match status" value="1"/>
</dbReference>
<dbReference type="PROSITE" id="PS51194">
    <property type="entry name" value="HELICASE_CTER"/>
    <property type="match status" value="1"/>
</dbReference>
<dbReference type="PROSITE" id="PS51195">
    <property type="entry name" value="Q_MOTIF"/>
    <property type="match status" value="1"/>
</dbReference>
<comment type="function">
    <text evidence="1">ATP-binding RNA helicase involved in 40S ribosomal subunit biogenesis and is required for the normal formation of 18S rRNAs through pre-rRNA processing at A0, A1 and A2 sites. Required for vegetative growth (By similarity).</text>
</comment>
<comment type="catalytic activity">
    <reaction>
        <text>ATP + H2O = ADP + phosphate + H(+)</text>
        <dbReference type="Rhea" id="RHEA:13065"/>
        <dbReference type="ChEBI" id="CHEBI:15377"/>
        <dbReference type="ChEBI" id="CHEBI:15378"/>
        <dbReference type="ChEBI" id="CHEBI:30616"/>
        <dbReference type="ChEBI" id="CHEBI:43474"/>
        <dbReference type="ChEBI" id="CHEBI:456216"/>
        <dbReference type="EC" id="3.6.4.13"/>
    </reaction>
</comment>
<comment type="subcellular location">
    <subcellularLocation>
        <location evidence="1">Nucleus</location>
        <location evidence="1">Nucleolus</location>
    </subcellularLocation>
</comment>
<comment type="domain">
    <text>The Q motif is unique to and characteristic of the DEAD box family of RNA helicases and controls ATP binding and hydrolysis.</text>
</comment>
<comment type="similarity">
    <text evidence="5">Belongs to the DEAD box helicase family. DDX49/DBP8 subfamily.</text>
</comment>
<organism>
    <name type="scientific">Neurospora crassa (strain ATCC 24698 / 74-OR23-1A / CBS 708.71 / DSM 1257 / FGSC 987)</name>
    <dbReference type="NCBI Taxonomy" id="367110"/>
    <lineage>
        <taxon>Eukaryota</taxon>
        <taxon>Fungi</taxon>
        <taxon>Dikarya</taxon>
        <taxon>Ascomycota</taxon>
        <taxon>Pezizomycotina</taxon>
        <taxon>Sordariomycetes</taxon>
        <taxon>Sordariomycetidae</taxon>
        <taxon>Sordariales</taxon>
        <taxon>Sordariaceae</taxon>
        <taxon>Neurospora</taxon>
    </lineage>
</organism>
<reference key="1">
    <citation type="journal article" date="2003" name="Nature">
        <title>The genome sequence of the filamentous fungus Neurospora crassa.</title>
        <authorList>
            <person name="Galagan J.E."/>
            <person name="Calvo S.E."/>
            <person name="Borkovich K.A."/>
            <person name="Selker E.U."/>
            <person name="Read N.D."/>
            <person name="Jaffe D.B."/>
            <person name="FitzHugh W."/>
            <person name="Ma L.-J."/>
            <person name="Smirnov S."/>
            <person name="Purcell S."/>
            <person name="Rehman B."/>
            <person name="Elkins T."/>
            <person name="Engels R."/>
            <person name="Wang S."/>
            <person name="Nielsen C.B."/>
            <person name="Butler J."/>
            <person name="Endrizzi M."/>
            <person name="Qui D."/>
            <person name="Ianakiev P."/>
            <person name="Bell-Pedersen D."/>
            <person name="Nelson M.A."/>
            <person name="Werner-Washburne M."/>
            <person name="Selitrennikoff C.P."/>
            <person name="Kinsey J.A."/>
            <person name="Braun E.L."/>
            <person name="Zelter A."/>
            <person name="Schulte U."/>
            <person name="Kothe G.O."/>
            <person name="Jedd G."/>
            <person name="Mewes H.-W."/>
            <person name="Staben C."/>
            <person name="Marcotte E."/>
            <person name="Greenberg D."/>
            <person name="Roy A."/>
            <person name="Foley K."/>
            <person name="Naylor J."/>
            <person name="Stange-Thomann N."/>
            <person name="Barrett R."/>
            <person name="Gnerre S."/>
            <person name="Kamal M."/>
            <person name="Kamvysselis M."/>
            <person name="Mauceli E.W."/>
            <person name="Bielke C."/>
            <person name="Rudd S."/>
            <person name="Frishman D."/>
            <person name="Krystofova S."/>
            <person name="Rasmussen C."/>
            <person name="Metzenberg R.L."/>
            <person name="Perkins D.D."/>
            <person name="Kroken S."/>
            <person name="Cogoni C."/>
            <person name="Macino G."/>
            <person name="Catcheside D.E.A."/>
            <person name="Li W."/>
            <person name="Pratt R.J."/>
            <person name="Osmani S.A."/>
            <person name="DeSouza C.P.C."/>
            <person name="Glass N.L."/>
            <person name="Orbach M.J."/>
            <person name="Berglund J.A."/>
            <person name="Voelker R."/>
            <person name="Yarden O."/>
            <person name="Plamann M."/>
            <person name="Seiler S."/>
            <person name="Dunlap J.C."/>
            <person name="Radford A."/>
            <person name="Aramayo R."/>
            <person name="Natvig D.O."/>
            <person name="Alex L.A."/>
            <person name="Mannhaupt G."/>
            <person name="Ebbole D.J."/>
            <person name="Freitag M."/>
            <person name="Paulsen I."/>
            <person name="Sachs M.S."/>
            <person name="Lander E.S."/>
            <person name="Nusbaum C."/>
            <person name="Birren B.W."/>
        </authorList>
    </citation>
    <scope>NUCLEOTIDE SEQUENCE [LARGE SCALE GENOMIC DNA]</scope>
    <source>
        <strain>ATCC 24698 / 74-OR23-1A / CBS 708.71 / DSM 1257 / FGSC 987</strain>
    </source>
</reference>